<protein>
    <recommendedName>
        <fullName>Ferredoxin-2</fullName>
    </recommendedName>
</protein>
<sequence>MVEFLNFEVLEDHGWALQDEDLFAKAADANLQSTDFGRFYVDPNDTLLEAAEKNGFAWPFACRGGACTNCAVAVVDGEMPSPASHILPPELTEKGIRLSCIAAPVSDDAKIVYNLKHLPEVSELLLPASRFEQASSTD</sequence>
<name>FER2_HALMA</name>
<keyword id="KW-0001">2Fe-2S</keyword>
<keyword id="KW-0249">Electron transport</keyword>
<keyword id="KW-0408">Iron</keyword>
<keyword id="KW-0411">Iron-sulfur</keyword>
<keyword id="KW-0479">Metal-binding</keyword>
<keyword id="KW-1185">Reference proteome</keyword>
<keyword id="KW-0813">Transport</keyword>
<reference key="1">
    <citation type="journal article" date="2004" name="Genome Res.">
        <title>Genome sequence of Haloarcula marismortui: a halophilic archaeon from the Dead Sea.</title>
        <authorList>
            <person name="Baliga N.S."/>
            <person name="Bonneau R."/>
            <person name="Facciotti M.T."/>
            <person name="Pan M."/>
            <person name="Glusman G."/>
            <person name="Deutsch E.W."/>
            <person name="Shannon P."/>
            <person name="Chiu Y."/>
            <person name="Weng R.S."/>
            <person name="Gan R.R."/>
            <person name="Hung P."/>
            <person name="Date S.V."/>
            <person name="Marcotte E."/>
            <person name="Hood L."/>
            <person name="Ng W.V."/>
        </authorList>
    </citation>
    <scope>NUCLEOTIDE SEQUENCE [LARGE SCALE GENOMIC DNA]</scope>
    <source>
        <strain>ATCC 43049 / DSM 3752 / JCM 8966 / VKM B-1809</strain>
    </source>
</reference>
<comment type="function">
    <text>Ferredoxins are iron-sulfur proteins that transfer electrons in a wide variety of metabolic reactions.</text>
</comment>
<comment type="cofactor">
    <cofactor evidence="1">
        <name>[2Fe-2S] cluster</name>
        <dbReference type="ChEBI" id="CHEBI:190135"/>
    </cofactor>
    <text evidence="1">Binds 1 [2Fe-2S] cluster.</text>
</comment>
<comment type="similarity">
    <text evidence="3">Belongs to the 2Fe2S plant-type ferredoxin family.</text>
</comment>
<accession>Q5UZ63</accession>
<evidence type="ECO:0000250" key="1"/>
<evidence type="ECO:0000255" key="2">
    <source>
        <dbReference type="PROSITE-ProRule" id="PRU00465"/>
    </source>
</evidence>
<evidence type="ECO:0000305" key="3"/>
<proteinExistence type="inferred from homology"/>
<gene>
    <name type="primary">fer2</name>
    <name type="ordered locus">rrnAC2662</name>
</gene>
<dbReference type="EMBL" id="AY596297">
    <property type="protein sequence ID" value="AAV47440.1"/>
    <property type="molecule type" value="Genomic_DNA"/>
</dbReference>
<dbReference type="SMR" id="Q5UZ63"/>
<dbReference type="STRING" id="272569.rrnAC2662"/>
<dbReference type="PaxDb" id="272569-rrnAC2662"/>
<dbReference type="EnsemblBacteria" id="AAV47440">
    <property type="protein sequence ID" value="AAV47440"/>
    <property type="gene ID" value="rrnAC2662"/>
</dbReference>
<dbReference type="KEGG" id="hma:rrnAC2662"/>
<dbReference type="PATRIC" id="fig|272569.17.peg.3255"/>
<dbReference type="eggNOG" id="arCOG02845">
    <property type="taxonomic scope" value="Archaea"/>
</dbReference>
<dbReference type="HOGENOM" id="CLU_1773154_0_0_2"/>
<dbReference type="Proteomes" id="UP000001169">
    <property type="component" value="Chromosome I"/>
</dbReference>
<dbReference type="GO" id="GO:0051537">
    <property type="term" value="F:2 iron, 2 sulfur cluster binding"/>
    <property type="evidence" value="ECO:0007669"/>
    <property type="project" value="UniProtKB-KW"/>
</dbReference>
<dbReference type="GO" id="GO:0046872">
    <property type="term" value="F:metal ion binding"/>
    <property type="evidence" value="ECO:0007669"/>
    <property type="project" value="UniProtKB-KW"/>
</dbReference>
<dbReference type="CDD" id="cd00207">
    <property type="entry name" value="fer2"/>
    <property type="match status" value="1"/>
</dbReference>
<dbReference type="Gene3D" id="3.10.20.30">
    <property type="match status" value="1"/>
</dbReference>
<dbReference type="InterPro" id="IPR036010">
    <property type="entry name" value="2Fe-2S_ferredoxin-like_sf"/>
</dbReference>
<dbReference type="InterPro" id="IPR001041">
    <property type="entry name" value="2Fe-2S_ferredoxin-type"/>
</dbReference>
<dbReference type="InterPro" id="IPR006058">
    <property type="entry name" value="2Fe2S_fd_BS"/>
</dbReference>
<dbReference type="InterPro" id="IPR053441">
    <property type="entry name" value="2Fe2S_Ferredoxin"/>
</dbReference>
<dbReference type="InterPro" id="IPR012675">
    <property type="entry name" value="Beta-grasp_dom_sf"/>
</dbReference>
<dbReference type="NCBIfam" id="NF041393">
    <property type="entry name" value="Frdxn_Halo"/>
    <property type="match status" value="1"/>
</dbReference>
<dbReference type="PANTHER" id="PTHR43112">
    <property type="entry name" value="FERREDOXIN"/>
    <property type="match status" value="1"/>
</dbReference>
<dbReference type="PANTHER" id="PTHR43112:SF3">
    <property type="entry name" value="FERREDOXIN-2, CHLOROPLASTIC"/>
    <property type="match status" value="1"/>
</dbReference>
<dbReference type="Pfam" id="PF00111">
    <property type="entry name" value="Fer2"/>
    <property type="match status" value="1"/>
</dbReference>
<dbReference type="SUPFAM" id="SSF54292">
    <property type="entry name" value="2Fe-2S ferredoxin-like"/>
    <property type="match status" value="1"/>
</dbReference>
<dbReference type="PROSITE" id="PS00197">
    <property type="entry name" value="2FE2S_FER_1"/>
    <property type="match status" value="1"/>
</dbReference>
<dbReference type="PROSITE" id="PS51085">
    <property type="entry name" value="2FE2S_FER_2"/>
    <property type="match status" value="1"/>
</dbReference>
<organism>
    <name type="scientific">Haloarcula marismortui (strain ATCC 43049 / DSM 3752 / JCM 8966 / VKM B-1809)</name>
    <name type="common">Halobacterium marismortui</name>
    <dbReference type="NCBI Taxonomy" id="272569"/>
    <lineage>
        <taxon>Archaea</taxon>
        <taxon>Methanobacteriati</taxon>
        <taxon>Methanobacteriota</taxon>
        <taxon>Stenosarchaea group</taxon>
        <taxon>Halobacteria</taxon>
        <taxon>Halobacteriales</taxon>
        <taxon>Haloarculaceae</taxon>
        <taxon>Haloarcula</taxon>
    </lineage>
</organism>
<feature type="chain" id="PRO_0000189386" description="Ferredoxin-2">
    <location>
        <begin position="1"/>
        <end position="138"/>
    </location>
</feature>
<feature type="domain" description="2Fe-2S ferredoxin-type" evidence="2">
    <location>
        <begin position="27"/>
        <end position="117"/>
    </location>
</feature>
<feature type="binding site" evidence="2">
    <location>
        <position position="62"/>
    </location>
    <ligand>
        <name>[2Fe-2S] cluster</name>
        <dbReference type="ChEBI" id="CHEBI:190135"/>
    </ligand>
</feature>
<feature type="binding site" evidence="2">
    <location>
        <position position="67"/>
    </location>
    <ligand>
        <name>[2Fe-2S] cluster</name>
        <dbReference type="ChEBI" id="CHEBI:190135"/>
    </ligand>
</feature>
<feature type="binding site" evidence="2">
    <location>
        <position position="70"/>
    </location>
    <ligand>
        <name>[2Fe-2S] cluster</name>
        <dbReference type="ChEBI" id="CHEBI:190135"/>
    </ligand>
</feature>
<feature type="binding site" evidence="2">
    <location>
        <position position="100"/>
    </location>
    <ligand>
        <name>[2Fe-2S] cluster</name>
        <dbReference type="ChEBI" id="CHEBI:190135"/>
    </ligand>
</feature>